<reference key="1">
    <citation type="journal article" date="2008" name="Genome Biol.">
        <title>A genomic analysis of the archaeal system Ignicoccus hospitalis-Nanoarchaeum equitans.</title>
        <authorList>
            <person name="Podar M."/>
            <person name="Anderson I."/>
            <person name="Makarova K.S."/>
            <person name="Elkins J.G."/>
            <person name="Ivanova N."/>
            <person name="Wall M.A."/>
            <person name="Lykidis A."/>
            <person name="Mavromatis K."/>
            <person name="Sun H."/>
            <person name="Hudson M.E."/>
            <person name="Chen W."/>
            <person name="Deciu C."/>
            <person name="Hutchison D."/>
            <person name="Eads J.R."/>
            <person name="Anderson A."/>
            <person name="Fernandes F."/>
            <person name="Szeto E."/>
            <person name="Lapidus A."/>
            <person name="Kyrpides N.C."/>
            <person name="Saier M.H. Jr."/>
            <person name="Richardson P.M."/>
            <person name="Rachel R."/>
            <person name="Huber H."/>
            <person name="Eisen J.A."/>
            <person name="Koonin E.V."/>
            <person name="Keller M."/>
            <person name="Stetter K.O."/>
        </authorList>
    </citation>
    <scope>NUCLEOTIDE SEQUENCE [LARGE SCALE GENOMIC DNA]</scope>
    <source>
        <strain>KIN4/I / DSM 18386 / JCM 14125</strain>
    </source>
</reference>
<dbReference type="EC" id="1.2.1.103" evidence="1"/>
<dbReference type="EC" id="1.2.1.106" evidence="1"/>
<dbReference type="EMBL" id="CP000816">
    <property type="protein sequence ID" value="ABU81910.1"/>
    <property type="molecule type" value="Genomic_DNA"/>
</dbReference>
<dbReference type="RefSeq" id="WP_011998762.1">
    <property type="nucleotide sequence ID" value="NC_009776.1"/>
</dbReference>
<dbReference type="SMR" id="A8AAF8"/>
<dbReference type="STRING" id="453591.Igni_0728"/>
<dbReference type="GeneID" id="5562500"/>
<dbReference type="KEGG" id="iho:Igni_0728"/>
<dbReference type="eggNOG" id="arCOG00495">
    <property type="taxonomic scope" value="Archaea"/>
</dbReference>
<dbReference type="HOGENOM" id="CLU_006384_0_1_2"/>
<dbReference type="OrthoDB" id="372053at2157"/>
<dbReference type="PhylomeDB" id="A8AAF8"/>
<dbReference type="UniPathway" id="UPA00033">
    <property type="reaction ID" value="UER00037"/>
</dbReference>
<dbReference type="UniPathway" id="UPA00068"/>
<dbReference type="Proteomes" id="UP000000262">
    <property type="component" value="Chromosome"/>
</dbReference>
<dbReference type="GO" id="GO:0005737">
    <property type="term" value="C:cytoplasm"/>
    <property type="evidence" value="ECO:0007669"/>
    <property type="project" value="UniProtKB-SubCell"/>
</dbReference>
<dbReference type="GO" id="GO:0043870">
    <property type="term" value="F:N-acetyl-gamma-aminoadipyl-phosphate reductase activity"/>
    <property type="evidence" value="ECO:0007669"/>
    <property type="project" value="RHEA"/>
</dbReference>
<dbReference type="GO" id="GO:0003942">
    <property type="term" value="F:N-acetyl-gamma-glutamyl-phosphate reductase activity"/>
    <property type="evidence" value="ECO:0007669"/>
    <property type="project" value="InterPro"/>
</dbReference>
<dbReference type="GO" id="GO:0051287">
    <property type="term" value="F:NAD binding"/>
    <property type="evidence" value="ECO:0007669"/>
    <property type="project" value="InterPro"/>
</dbReference>
<dbReference type="GO" id="GO:0070401">
    <property type="term" value="F:NADP+ binding"/>
    <property type="evidence" value="ECO:0007669"/>
    <property type="project" value="InterPro"/>
</dbReference>
<dbReference type="GO" id="GO:0042450">
    <property type="term" value="P:arginine biosynthetic process via ornithine"/>
    <property type="evidence" value="ECO:0007669"/>
    <property type="project" value="UniProtKB-UniRule"/>
</dbReference>
<dbReference type="GO" id="GO:0006526">
    <property type="term" value="P:L-arginine biosynthetic process"/>
    <property type="evidence" value="ECO:0007669"/>
    <property type="project" value="UniProtKB-UniPathway"/>
</dbReference>
<dbReference type="GO" id="GO:0019878">
    <property type="term" value="P:lysine biosynthetic process via aminoadipic acid"/>
    <property type="evidence" value="ECO:0007669"/>
    <property type="project" value="UniProtKB-UniRule"/>
</dbReference>
<dbReference type="CDD" id="cd23939">
    <property type="entry name" value="AGPR_1_C_LysY"/>
    <property type="match status" value="1"/>
</dbReference>
<dbReference type="CDD" id="cd17895">
    <property type="entry name" value="AGPR_1_N"/>
    <property type="match status" value="1"/>
</dbReference>
<dbReference type="Gene3D" id="3.30.360.10">
    <property type="entry name" value="Dihydrodipicolinate Reductase, domain 2"/>
    <property type="match status" value="1"/>
</dbReference>
<dbReference type="Gene3D" id="3.40.50.720">
    <property type="entry name" value="NAD(P)-binding Rossmann-like Domain"/>
    <property type="match status" value="1"/>
</dbReference>
<dbReference type="HAMAP" id="MF_00150">
    <property type="entry name" value="ArgC_type1"/>
    <property type="match status" value="1"/>
</dbReference>
<dbReference type="HAMAP" id="MF_02083">
    <property type="entry name" value="LysY"/>
    <property type="match status" value="1"/>
</dbReference>
<dbReference type="InterPro" id="IPR023013">
    <property type="entry name" value="AGPR_AS"/>
</dbReference>
<dbReference type="InterPro" id="IPR000706">
    <property type="entry name" value="AGPR_type-1"/>
</dbReference>
<dbReference type="InterPro" id="IPR037535">
    <property type="entry name" value="LysY"/>
</dbReference>
<dbReference type="InterPro" id="IPR036291">
    <property type="entry name" value="NAD(P)-bd_dom_sf"/>
</dbReference>
<dbReference type="InterPro" id="IPR050085">
    <property type="entry name" value="NAGSA_dehydrogenase"/>
</dbReference>
<dbReference type="InterPro" id="IPR000534">
    <property type="entry name" value="Semialdehyde_DH_NAD-bd"/>
</dbReference>
<dbReference type="NCBIfam" id="TIGR01850">
    <property type="entry name" value="argC"/>
    <property type="match status" value="1"/>
</dbReference>
<dbReference type="PANTHER" id="PTHR32338:SF11">
    <property type="entry name" value="[LYSW]-L-2-AMINOADIPATE_[LYSW]-L-GLUTAMATE PHOSPHATE REDUCTASE-RELATED"/>
    <property type="match status" value="1"/>
</dbReference>
<dbReference type="PANTHER" id="PTHR32338">
    <property type="entry name" value="N-ACETYL-GAMMA-GLUTAMYL-PHOSPHATE REDUCTASE, CHLOROPLASTIC-RELATED-RELATED"/>
    <property type="match status" value="1"/>
</dbReference>
<dbReference type="Pfam" id="PF01118">
    <property type="entry name" value="Semialdhyde_dh"/>
    <property type="match status" value="1"/>
</dbReference>
<dbReference type="Pfam" id="PF22698">
    <property type="entry name" value="Semialdhyde_dhC_1"/>
    <property type="match status" value="1"/>
</dbReference>
<dbReference type="SMART" id="SM00859">
    <property type="entry name" value="Semialdhyde_dh"/>
    <property type="match status" value="1"/>
</dbReference>
<dbReference type="SUPFAM" id="SSF55347">
    <property type="entry name" value="Glyceraldehyde-3-phosphate dehydrogenase-like, C-terminal domain"/>
    <property type="match status" value="1"/>
</dbReference>
<dbReference type="SUPFAM" id="SSF51735">
    <property type="entry name" value="NAD(P)-binding Rossmann-fold domains"/>
    <property type="match status" value="1"/>
</dbReference>
<dbReference type="PROSITE" id="PS01224">
    <property type="entry name" value="ARGC"/>
    <property type="match status" value="1"/>
</dbReference>
<keyword id="KW-0028">Amino-acid biosynthesis</keyword>
<keyword id="KW-0055">Arginine biosynthesis</keyword>
<keyword id="KW-0963">Cytoplasm</keyword>
<keyword id="KW-0457">Lysine biosynthesis</keyword>
<keyword id="KW-0521">NADP</keyword>
<keyword id="KW-0560">Oxidoreductase</keyword>
<keyword id="KW-1185">Reference proteome</keyword>
<evidence type="ECO:0000255" key="1">
    <source>
        <dbReference type="HAMAP-Rule" id="MF_02083"/>
    </source>
</evidence>
<protein>
    <recommendedName>
        <fullName evidence="1">Putative [LysW]-L-2-aminoadipate/[LysW]-L-glutamate phosphate reductase</fullName>
        <ecNumber evidence="1">1.2.1.103</ecNumber>
        <ecNumber evidence="1">1.2.1.106</ecNumber>
    </recommendedName>
</protein>
<proteinExistence type="inferred from homology"/>
<comment type="function">
    <text evidence="1">Involved in both the arginine and lysine biosynthetic pathways.</text>
</comment>
<comment type="catalytic activity">
    <reaction evidence="1">
        <text>[amino-group carrier protein]-C-terminal-N-(1-carboxy-5-oxopentan-1-yl)-L-glutamine + phosphate + NADP(+) = [amino-group carrier protein]-C-terminal-N-(1-carboxy-5-phosphooxy-5-oxopentan-1-yl)-L-glutamine + NADPH + H(+)</text>
        <dbReference type="Rhea" id="RHEA:41948"/>
        <dbReference type="Rhea" id="RHEA-COMP:9712"/>
        <dbReference type="Rhea" id="RHEA-COMP:9714"/>
        <dbReference type="ChEBI" id="CHEBI:15378"/>
        <dbReference type="ChEBI" id="CHEBI:43474"/>
        <dbReference type="ChEBI" id="CHEBI:57783"/>
        <dbReference type="ChEBI" id="CHEBI:58349"/>
        <dbReference type="ChEBI" id="CHEBI:78499"/>
        <dbReference type="ChEBI" id="CHEBI:78501"/>
        <dbReference type="EC" id="1.2.1.103"/>
    </reaction>
</comment>
<comment type="catalytic activity">
    <reaction evidence="1">
        <text>[amino-group carrier protein]-C-terminal-gamma-(L-glutamyl-5-semialdehyde)-L-glutamate + phosphate + NADP(+) = [amino-group carrier protein]-C-terminal-gamma-(5-phospho-L-glutamyl)-L-glutamate + NADPH + H(+)</text>
        <dbReference type="Rhea" id="RHEA:52668"/>
        <dbReference type="Rhea" id="RHEA-COMP:13313"/>
        <dbReference type="Rhea" id="RHEA-COMP:13327"/>
        <dbReference type="ChEBI" id="CHEBI:15378"/>
        <dbReference type="ChEBI" id="CHEBI:43474"/>
        <dbReference type="ChEBI" id="CHEBI:57783"/>
        <dbReference type="ChEBI" id="CHEBI:58349"/>
        <dbReference type="ChEBI" id="CHEBI:136717"/>
        <dbReference type="ChEBI" id="CHEBI:136761"/>
        <dbReference type="EC" id="1.2.1.106"/>
    </reaction>
</comment>
<comment type="pathway">
    <text evidence="1">Amino-acid biosynthesis; L-lysine biosynthesis via AAA pathway; L-lysine from L-alpha-aminoadipate (Thermus route): step 3/5.</text>
</comment>
<comment type="pathway">
    <text evidence="1">Amino-acid biosynthesis; L-arginine biosynthesis.</text>
</comment>
<comment type="subcellular location">
    <subcellularLocation>
        <location evidence="1">Cytoplasm</location>
    </subcellularLocation>
</comment>
<comment type="similarity">
    <text evidence="1">Belongs to the NAGSA dehydrogenase family. Type 1 subfamily. LysY sub-subfamily.</text>
</comment>
<name>LYSY_IGNH4</name>
<gene>
    <name evidence="1" type="primary">lysY</name>
    <name type="ordered locus">Igni_0728</name>
</gene>
<feature type="chain" id="PRO_1000071516" description="Putative [LysW]-L-2-aminoadipate/[LysW]-L-glutamate phosphate reductase">
    <location>
        <begin position="1"/>
        <end position="356"/>
    </location>
</feature>
<feature type="active site" evidence="1">
    <location>
        <position position="157"/>
    </location>
</feature>
<feature type="binding site" evidence="1">
    <location>
        <begin position="11"/>
        <end position="14"/>
    </location>
    <ligand>
        <name>NADP(+)</name>
        <dbReference type="ChEBI" id="CHEBI:58349"/>
    </ligand>
</feature>
<feature type="binding site" evidence="1">
    <location>
        <position position="323"/>
    </location>
    <ligand>
        <name>NADP(+)</name>
        <dbReference type="ChEBI" id="CHEBI:58349"/>
    </ligand>
</feature>
<organism>
    <name type="scientific">Ignicoccus hospitalis (strain KIN4/I / DSM 18386 / JCM 14125)</name>
    <dbReference type="NCBI Taxonomy" id="453591"/>
    <lineage>
        <taxon>Archaea</taxon>
        <taxon>Thermoproteota</taxon>
        <taxon>Thermoprotei</taxon>
        <taxon>Desulfurococcales</taxon>
        <taxon>Desulfurococcaceae</taxon>
        <taxon>Ignicoccus</taxon>
    </lineage>
</organism>
<sequence length="356" mass="39316">MTYEVAIVGASGYTGGELLRVLAVHPDVNVKVVTSREYANKPVYYAHPHLRGIYPASLKFKRLDDPDQLSDVVGDVDLVFLALPHKVSLHYVPKALEVGYKVVDLSADYRLKRVEDYKTWYGYEHPYPDLLEKAVYGLPELYGDKIRGAQLVANPGCNATSSILAVLPPAAERIIDLDRIVVDVKVGSSEAGAKPYRGGHHPEREGTARPYDAEGHRHVAELEQVIRDYTGRDVKVGFTPHAVSMIRGSLASAYSWLTKDLAPLDVQRIYAKYYAGKKFVKIVRGAPMPYPDVKNVYGSNYAEVGFALDKRVGRLAMFAAIDNLMKGAAGTAVQNMNLMLGMDEDEGLKNLVPVRP</sequence>
<accession>A8AAF8</accession>